<dbReference type="EMBL" id="CP000437">
    <property type="protein sequence ID" value="ABI82207.1"/>
    <property type="molecule type" value="Genomic_DNA"/>
</dbReference>
<dbReference type="RefSeq" id="WP_003014194.1">
    <property type="nucleotide sequence ID" value="NC_017463.1"/>
</dbReference>
<dbReference type="SMR" id="Q0BNX7"/>
<dbReference type="KEGG" id="fth:FTH_0176"/>
<dbReference type="UniPathway" id="UPA00345"/>
<dbReference type="GO" id="GO:0005737">
    <property type="term" value="C:cytoplasm"/>
    <property type="evidence" value="ECO:0007669"/>
    <property type="project" value="UniProtKB-SubCell"/>
</dbReference>
<dbReference type="GO" id="GO:0003746">
    <property type="term" value="F:translation elongation factor activity"/>
    <property type="evidence" value="ECO:0007669"/>
    <property type="project" value="UniProtKB-UniRule"/>
</dbReference>
<dbReference type="GO" id="GO:0043043">
    <property type="term" value="P:peptide biosynthetic process"/>
    <property type="evidence" value="ECO:0007669"/>
    <property type="project" value="InterPro"/>
</dbReference>
<dbReference type="CDD" id="cd04470">
    <property type="entry name" value="S1_EF-P_repeat_1"/>
    <property type="match status" value="1"/>
</dbReference>
<dbReference type="CDD" id="cd05794">
    <property type="entry name" value="S1_EF-P_repeat_2"/>
    <property type="match status" value="1"/>
</dbReference>
<dbReference type="FunFam" id="2.30.30.30:FF:000003">
    <property type="entry name" value="Elongation factor P"/>
    <property type="match status" value="1"/>
</dbReference>
<dbReference type="FunFam" id="2.40.50.140:FF:000004">
    <property type="entry name" value="Elongation factor P"/>
    <property type="match status" value="1"/>
</dbReference>
<dbReference type="FunFam" id="2.40.50.140:FF:000009">
    <property type="entry name" value="Elongation factor P"/>
    <property type="match status" value="1"/>
</dbReference>
<dbReference type="Gene3D" id="2.30.30.30">
    <property type="match status" value="1"/>
</dbReference>
<dbReference type="Gene3D" id="2.40.50.140">
    <property type="entry name" value="Nucleic acid-binding proteins"/>
    <property type="match status" value="2"/>
</dbReference>
<dbReference type="HAMAP" id="MF_00141">
    <property type="entry name" value="EF_P"/>
    <property type="match status" value="1"/>
</dbReference>
<dbReference type="InterPro" id="IPR015365">
    <property type="entry name" value="Elong-fact-P_C"/>
</dbReference>
<dbReference type="InterPro" id="IPR012340">
    <property type="entry name" value="NA-bd_OB-fold"/>
</dbReference>
<dbReference type="InterPro" id="IPR014722">
    <property type="entry name" value="Rib_uL2_dom2"/>
</dbReference>
<dbReference type="InterPro" id="IPR020599">
    <property type="entry name" value="Transl_elong_fac_P/YeiP"/>
</dbReference>
<dbReference type="InterPro" id="IPR013185">
    <property type="entry name" value="Transl_elong_KOW-like"/>
</dbReference>
<dbReference type="InterPro" id="IPR001059">
    <property type="entry name" value="Transl_elong_P/YeiP_cen"/>
</dbReference>
<dbReference type="InterPro" id="IPR013852">
    <property type="entry name" value="Transl_elong_P/YeiP_CS"/>
</dbReference>
<dbReference type="InterPro" id="IPR011768">
    <property type="entry name" value="Transl_elongation_fac_P"/>
</dbReference>
<dbReference type="InterPro" id="IPR008991">
    <property type="entry name" value="Translation_prot_SH3-like_sf"/>
</dbReference>
<dbReference type="NCBIfam" id="TIGR00038">
    <property type="entry name" value="efp"/>
    <property type="match status" value="1"/>
</dbReference>
<dbReference type="NCBIfam" id="NF001810">
    <property type="entry name" value="PRK00529.1"/>
    <property type="match status" value="1"/>
</dbReference>
<dbReference type="PANTHER" id="PTHR30053">
    <property type="entry name" value="ELONGATION FACTOR P"/>
    <property type="match status" value="1"/>
</dbReference>
<dbReference type="PANTHER" id="PTHR30053:SF12">
    <property type="entry name" value="ELONGATION FACTOR P (EF-P) FAMILY PROTEIN"/>
    <property type="match status" value="1"/>
</dbReference>
<dbReference type="Pfam" id="PF01132">
    <property type="entry name" value="EFP"/>
    <property type="match status" value="1"/>
</dbReference>
<dbReference type="Pfam" id="PF08207">
    <property type="entry name" value="EFP_N"/>
    <property type="match status" value="1"/>
</dbReference>
<dbReference type="Pfam" id="PF09285">
    <property type="entry name" value="Elong-fact-P_C"/>
    <property type="match status" value="1"/>
</dbReference>
<dbReference type="PIRSF" id="PIRSF005901">
    <property type="entry name" value="EF-P"/>
    <property type="match status" value="1"/>
</dbReference>
<dbReference type="SMART" id="SM01185">
    <property type="entry name" value="EFP"/>
    <property type="match status" value="1"/>
</dbReference>
<dbReference type="SMART" id="SM00841">
    <property type="entry name" value="Elong-fact-P_C"/>
    <property type="match status" value="1"/>
</dbReference>
<dbReference type="SUPFAM" id="SSF50249">
    <property type="entry name" value="Nucleic acid-binding proteins"/>
    <property type="match status" value="2"/>
</dbReference>
<dbReference type="SUPFAM" id="SSF50104">
    <property type="entry name" value="Translation proteins SH3-like domain"/>
    <property type="match status" value="1"/>
</dbReference>
<dbReference type="PROSITE" id="PS01275">
    <property type="entry name" value="EFP"/>
    <property type="match status" value="1"/>
</dbReference>
<comment type="function">
    <text evidence="1">Involved in peptide bond synthesis. Alleviates ribosome stalling that occurs when 3 or more consecutive Pro residues or the sequence PPG is present in a protein, possibly by augmenting the peptidyl transferase activity of the ribosome. Modification of Lys-34 is required for alleviation.</text>
</comment>
<comment type="pathway">
    <text evidence="1">Protein biosynthesis; polypeptide chain elongation.</text>
</comment>
<comment type="subcellular location">
    <subcellularLocation>
        <location evidence="1">Cytoplasm</location>
    </subcellularLocation>
</comment>
<comment type="PTM">
    <text evidence="1">May be beta-lysylated on the epsilon-amino group of Lys-34 by the combined action of EpmA and EpmB, and then hydroxylated on the C5 position of the same residue by EpmC (if this protein is present). Lysylation is critical for the stimulatory effect of EF-P on peptide-bond formation. The lysylation moiety may extend toward the peptidyltransferase center and stabilize the terminal 3-CCA end of the tRNA. Hydroxylation of the C5 position on Lys-34 may allow additional potential stabilizing hydrogen-bond interactions with the P-tRNA.</text>
</comment>
<comment type="similarity">
    <text evidence="1">Belongs to the elongation factor P family.</text>
</comment>
<name>EFP_FRATO</name>
<organism>
    <name type="scientific">Francisella tularensis subsp. holarctica (strain OSU18)</name>
    <dbReference type="NCBI Taxonomy" id="393011"/>
    <lineage>
        <taxon>Bacteria</taxon>
        <taxon>Pseudomonadati</taxon>
        <taxon>Pseudomonadota</taxon>
        <taxon>Gammaproteobacteria</taxon>
        <taxon>Thiotrichales</taxon>
        <taxon>Francisellaceae</taxon>
        <taxon>Francisella</taxon>
    </lineage>
</organism>
<keyword id="KW-0963">Cytoplasm</keyword>
<keyword id="KW-0251">Elongation factor</keyword>
<keyword id="KW-0379">Hydroxylation</keyword>
<keyword id="KW-0648">Protein biosynthesis</keyword>
<evidence type="ECO:0000255" key="1">
    <source>
        <dbReference type="HAMAP-Rule" id="MF_00141"/>
    </source>
</evidence>
<protein>
    <recommendedName>
        <fullName evidence="1">Elongation factor P</fullName>
        <shortName evidence="1">EF-P</shortName>
    </recommendedName>
</protein>
<sequence length="189" mass="20903">MASYSTNEFKGGLKVLIDGNPMVIVENEFVKPGKGQAFNRVKLKNLLNDRVVEKTFKSGESVEAADVEELTTVYSYFDGDSYVFMHPETFEQYMVSEEALGETKKWLKDQDEYQVILFNGQPISIIAANFVNLEIIETDPGLKGDTAGTGGKPATLSTGAVVRVPLFVQTGEIIKVDTRTSTYVSRVKD</sequence>
<feature type="chain" id="PRO_1000010749" description="Elongation factor P">
    <location>
        <begin position="1"/>
        <end position="189"/>
    </location>
</feature>
<feature type="modified residue" description="N6-(3,6-diaminohexanoyl)-5-hydroxylysine" evidence="1">
    <location>
        <position position="34"/>
    </location>
</feature>
<accession>Q0BNX7</accession>
<reference key="1">
    <citation type="journal article" date="2006" name="J. Bacteriol.">
        <title>Chromosome rearrangement and diversification of Francisella tularensis revealed by the type B (OSU18) genome sequence.</title>
        <authorList>
            <person name="Petrosino J.F."/>
            <person name="Xiang Q."/>
            <person name="Karpathy S.E."/>
            <person name="Jiang H."/>
            <person name="Yerrapragada S."/>
            <person name="Liu Y."/>
            <person name="Gioia J."/>
            <person name="Hemphill L."/>
            <person name="Gonzalez A."/>
            <person name="Raghavan T.M."/>
            <person name="Uzman A."/>
            <person name="Fox G.E."/>
            <person name="Highlander S."/>
            <person name="Reichard M."/>
            <person name="Morton R.J."/>
            <person name="Clinkenbeard K.D."/>
            <person name="Weinstock G.M."/>
        </authorList>
    </citation>
    <scope>NUCLEOTIDE SEQUENCE [LARGE SCALE GENOMIC DNA]</scope>
    <source>
        <strain>OSU18</strain>
    </source>
</reference>
<proteinExistence type="inferred from homology"/>
<gene>
    <name evidence="1" type="primary">efp</name>
    <name type="ordered locus">FTH_0176</name>
</gene>